<sequence>MIIPKKNRNEICKYLFQEGVLYAKKDYNLAKHPQIDVPNLQVIKLMQSFKSKEYVRETFSWQYYYWYLTNDGIEHLRNYLNLPSEIVPATLKKSARPPGRPFGSGPPGDRPRGPPRFEGDRPRFGDRDGYRGGPRGAPGDFGGEKGGAPAEFQPSFRSSGGRPGFGRGGGGGFGAGPTSSSME</sequence>
<dbReference type="EMBL" id="AB054123">
    <property type="protein sequence ID" value="BAB21002.1"/>
    <property type="molecule type" value="mRNA"/>
</dbReference>
<dbReference type="EMBL" id="AL606632">
    <property type="protein sequence ID" value="CAD41005.1"/>
    <property type="molecule type" value="Genomic_DNA"/>
</dbReference>
<dbReference type="EMBL" id="AP008210">
    <property type="protein sequence ID" value="BAF14730.1"/>
    <property type="molecule type" value="Genomic_DNA"/>
</dbReference>
<dbReference type="EMBL" id="AP014960">
    <property type="protein sequence ID" value="BAS89251.1"/>
    <property type="molecule type" value="Genomic_DNA"/>
</dbReference>
<dbReference type="EMBL" id="CM000141">
    <property type="protein sequence ID" value="EAZ30777.1"/>
    <property type="molecule type" value="Genomic_DNA"/>
</dbReference>
<dbReference type="EMBL" id="AK102190">
    <property type="status" value="NOT_ANNOTATED_CDS"/>
    <property type="molecule type" value="mRNA"/>
</dbReference>
<dbReference type="RefSeq" id="XP_015623121.1">
    <property type="nucleotide sequence ID" value="XM_015767635.1"/>
</dbReference>
<dbReference type="RefSeq" id="XP_015636412.1">
    <property type="nucleotide sequence ID" value="XM_015780926.1"/>
</dbReference>
<dbReference type="SMR" id="P0DKK9"/>
<dbReference type="FunCoup" id="P0DKK9">
    <property type="interactions" value="2739"/>
</dbReference>
<dbReference type="STRING" id="39947.P0DKK9"/>
<dbReference type="PaxDb" id="39947-P0DKK9"/>
<dbReference type="EnsemblPlants" id="Os02t0549600-01">
    <property type="protein sequence ID" value="Os02t0549600-01"/>
    <property type="gene ID" value="Os02g0549600"/>
</dbReference>
<dbReference type="EnsemblPlants" id="Os04t0430100-01">
    <property type="protein sequence ID" value="Os04t0430100-01"/>
    <property type="gene ID" value="Os04g0430100"/>
</dbReference>
<dbReference type="Gramene" id="Os02t0549600-01">
    <property type="protein sequence ID" value="Os02t0549600-01"/>
    <property type="gene ID" value="Os02g0549600"/>
</dbReference>
<dbReference type="Gramene" id="Os04t0430100-01">
    <property type="protein sequence ID" value="Os04t0430100-01"/>
    <property type="gene ID" value="Os04g0430100"/>
</dbReference>
<dbReference type="KEGG" id="dosa:Os04g0430100"/>
<dbReference type="InParanoid" id="P0DKK9"/>
<dbReference type="OMA" id="YRRRDQE"/>
<dbReference type="OrthoDB" id="5211809at2759"/>
<dbReference type="Proteomes" id="UP000000763">
    <property type="component" value="Chromosome 4"/>
</dbReference>
<dbReference type="Proteomes" id="UP000007752">
    <property type="component" value="Chromosome 4"/>
</dbReference>
<dbReference type="Proteomes" id="UP000059680">
    <property type="component" value="Chromosome 4"/>
</dbReference>
<dbReference type="ExpressionAtlas" id="P0DKK9">
    <property type="expression patterns" value="baseline and differential"/>
</dbReference>
<dbReference type="GO" id="GO:0005737">
    <property type="term" value="C:cytoplasm"/>
    <property type="evidence" value="ECO:0007669"/>
    <property type="project" value="UniProtKB-SubCell"/>
</dbReference>
<dbReference type="GO" id="GO:1990904">
    <property type="term" value="C:ribonucleoprotein complex"/>
    <property type="evidence" value="ECO:0007669"/>
    <property type="project" value="UniProtKB-KW"/>
</dbReference>
<dbReference type="GO" id="GO:0005840">
    <property type="term" value="C:ribosome"/>
    <property type="evidence" value="ECO:0007669"/>
    <property type="project" value="UniProtKB-KW"/>
</dbReference>
<dbReference type="FunFam" id="1.10.10.10:FF:000025">
    <property type="entry name" value="40S ribosomal protein S10"/>
    <property type="match status" value="1"/>
</dbReference>
<dbReference type="Gene3D" id="1.10.10.10">
    <property type="entry name" value="Winged helix-like DNA-binding domain superfamily/Winged helix DNA-binding domain"/>
    <property type="match status" value="1"/>
</dbReference>
<dbReference type="InterPro" id="IPR005326">
    <property type="entry name" value="Plectin_eS10_N"/>
</dbReference>
<dbReference type="InterPro" id="IPR037447">
    <property type="entry name" value="Ribosomal_eS10"/>
</dbReference>
<dbReference type="InterPro" id="IPR036388">
    <property type="entry name" value="WH-like_DNA-bd_sf"/>
</dbReference>
<dbReference type="PANTHER" id="PTHR12146">
    <property type="entry name" value="40S RIBOSOMAL PROTEIN S10"/>
    <property type="match status" value="1"/>
</dbReference>
<dbReference type="PANTHER" id="PTHR12146:SF0">
    <property type="entry name" value="RIBOSOMAL PROTEIN S10"/>
    <property type="match status" value="1"/>
</dbReference>
<dbReference type="Pfam" id="PF03501">
    <property type="entry name" value="S10_plectin"/>
    <property type="match status" value="1"/>
</dbReference>
<evidence type="ECO:0000250" key="1"/>
<evidence type="ECO:0000256" key="2">
    <source>
        <dbReference type="SAM" id="MobiDB-lite"/>
    </source>
</evidence>
<evidence type="ECO:0000305" key="3"/>
<evidence type="ECO:0000312" key="4">
    <source>
        <dbReference type="EMBL" id="BAS89251.1"/>
    </source>
</evidence>
<evidence type="ECO:0000312" key="5">
    <source>
        <dbReference type="EMBL" id="CAD41005.1"/>
    </source>
</evidence>
<evidence type="ECO:0000312" key="6">
    <source>
        <dbReference type="EMBL" id="EAZ30777.1"/>
    </source>
</evidence>
<comment type="subcellular location">
    <subcellularLocation>
        <location evidence="1">Cytoplasm</location>
    </subcellularLocation>
</comment>
<comment type="similarity">
    <text evidence="3">Belongs to the eukaryotic ribosomal protein eS10 family.</text>
</comment>
<name>RS10B_ORYSJ</name>
<protein>
    <recommendedName>
        <fullName evidence="3">Small ribosomal subunit protein eS10y</fullName>
    </recommendedName>
    <alternativeName>
        <fullName>40S ribosomal protein S10-2</fullName>
    </alternativeName>
</protein>
<accession>P0DKK9</accession>
<accession>Q4LB27</accession>
<accession>Q6Z105</accession>
<accession>Q9AYP4</accession>
<proteinExistence type="evidence at transcript level"/>
<keyword id="KW-0963">Cytoplasm</keyword>
<keyword id="KW-1185">Reference proteome</keyword>
<keyword id="KW-0687">Ribonucleoprotein</keyword>
<keyword id="KW-0689">Ribosomal protein</keyword>
<reference key="1">
    <citation type="submission" date="2001-01" db="EMBL/GenBank/DDBJ databases">
        <title>Cloning of a cDNA coding for ribosomal protein S10 in rice.</title>
        <authorList>
            <person name="Liu S."/>
            <person name="Takano T."/>
        </authorList>
    </citation>
    <scope>NUCLEOTIDE SEQUENCE [MRNA]</scope>
    <source>
        <strain>cv. Nipponbare</strain>
    </source>
</reference>
<reference key="2">
    <citation type="journal article" date="2002" name="Nature">
        <title>Sequence and analysis of rice chromosome 4.</title>
        <authorList>
            <person name="Feng Q."/>
            <person name="Zhang Y."/>
            <person name="Hao P."/>
            <person name="Wang S."/>
            <person name="Fu G."/>
            <person name="Huang Y."/>
            <person name="Li Y."/>
            <person name="Zhu J."/>
            <person name="Liu Y."/>
            <person name="Hu X."/>
            <person name="Jia P."/>
            <person name="Zhang Y."/>
            <person name="Zhao Q."/>
            <person name="Ying K."/>
            <person name="Yu S."/>
            <person name="Tang Y."/>
            <person name="Weng Q."/>
            <person name="Zhang L."/>
            <person name="Lu Y."/>
            <person name="Mu J."/>
            <person name="Lu Y."/>
            <person name="Zhang L.S."/>
            <person name="Yu Z."/>
            <person name="Fan D."/>
            <person name="Liu X."/>
            <person name="Lu T."/>
            <person name="Li C."/>
            <person name="Wu Y."/>
            <person name="Sun T."/>
            <person name="Lei H."/>
            <person name="Li T."/>
            <person name="Hu H."/>
            <person name="Guan J."/>
            <person name="Wu M."/>
            <person name="Zhang R."/>
            <person name="Zhou B."/>
            <person name="Chen Z."/>
            <person name="Chen L."/>
            <person name="Jin Z."/>
            <person name="Wang R."/>
            <person name="Yin H."/>
            <person name="Cai Z."/>
            <person name="Ren S."/>
            <person name="Lv G."/>
            <person name="Gu W."/>
            <person name="Zhu G."/>
            <person name="Tu Y."/>
            <person name="Jia J."/>
            <person name="Zhang Y."/>
            <person name="Chen J."/>
            <person name="Kang H."/>
            <person name="Chen X."/>
            <person name="Shao C."/>
            <person name="Sun Y."/>
            <person name="Hu Q."/>
            <person name="Zhang X."/>
            <person name="Zhang W."/>
            <person name="Wang L."/>
            <person name="Ding C."/>
            <person name="Sheng H."/>
            <person name="Gu J."/>
            <person name="Chen S."/>
            <person name="Ni L."/>
            <person name="Zhu F."/>
            <person name="Chen W."/>
            <person name="Lan L."/>
            <person name="Lai Y."/>
            <person name="Cheng Z."/>
            <person name="Gu M."/>
            <person name="Jiang J."/>
            <person name="Li J."/>
            <person name="Hong G."/>
            <person name="Xue Y."/>
            <person name="Han B."/>
        </authorList>
    </citation>
    <scope>NUCLEOTIDE SEQUENCE [LARGE SCALE GENOMIC DNA]</scope>
    <source>
        <strain>cv. Nipponbare</strain>
    </source>
</reference>
<reference key="3">
    <citation type="journal article" date="2005" name="Nature">
        <title>The map-based sequence of the rice genome.</title>
        <authorList>
            <consortium name="International rice genome sequencing project (IRGSP)"/>
        </authorList>
    </citation>
    <scope>NUCLEOTIDE SEQUENCE [LARGE SCALE GENOMIC DNA]</scope>
    <source>
        <strain>cv. Nipponbare</strain>
    </source>
</reference>
<reference key="4">
    <citation type="journal article" date="2008" name="Nucleic Acids Res.">
        <title>The rice annotation project database (RAP-DB): 2008 update.</title>
        <authorList>
            <consortium name="The rice annotation project (RAP)"/>
        </authorList>
    </citation>
    <scope>GENOME REANNOTATION</scope>
    <source>
        <strain>cv. Nipponbare</strain>
    </source>
</reference>
<reference key="5">
    <citation type="journal article" date="2013" name="Rice">
        <title>Improvement of the Oryza sativa Nipponbare reference genome using next generation sequence and optical map data.</title>
        <authorList>
            <person name="Kawahara Y."/>
            <person name="de la Bastide M."/>
            <person name="Hamilton J.P."/>
            <person name="Kanamori H."/>
            <person name="McCombie W.R."/>
            <person name="Ouyang S."/>
            <person name="Schwartz D.C."/>
            <person name="Tanaka T."/>
            <person name="Wu J."/>
            <person name="Zhou S."/>
            <person name="Childs K.L."/>
            <person name="Davidson R.M."/>
            <person name="Lin H."/>
            <person name="Quesada-Ocampo L."/>
            <person name="Vaillancourt B."/>
            <person name="Sakai H."/>
            <person name="Lee S.S."/>
            <person name="Kim J."/>
            <person name="Numa H."/>
            <person name="Itoh T."/>
            <person name="Buell C.R."/>
            <person name="Matsumoto T."/>
        </authorList>
    </citation>
    <scope>GENOME REANNOTATION</scope>
    <source>
        <strain>cv. Nipponbare</strain>
    </source>
</reference>
<reference key="6">
    <citation type="journal article" date="2005" name="PLoS Biol.">
        <title>The genomes of Oryza sativa: a history of duplications.</title>
        <authorList>
            <person name="Yu J."/>
            <person name="Wang J."/>
            <person name="Lin W."/>
            <person name="Li S."/>
            <person name="Li H."/>
            <person name="Zhou J."/>
            <person name="Ni P."/>
            <person name="Dong W."/>
            <person name="Hu S."/>
            <person name="Zeng C."/>
            <person name="Zhang J."/>
            <person name="Zhang Y."/>
            <person name="Li R."/>
            <person name="Xu Z."/>
            <person name="Li S."/>
            <person name="Li X."/>
            <person name="Zheng H."/>
            <person name="Cong L."/>
            <person name="Lin L."/>
            <person name="Yin J."/>
            <person name="Geng J."/>
            <person name="Li G."/>
            <person name="Shi J."/>
            <person name="Liu J."/>
            <person name="Lv H."/>
            <person name="Li J."/>
            <person name="Wang J."/>
            <person name="Deng Y."/>
            <person name="Ran L."/>
            <person name="Shi X."/>
            <person name="Wang X."/>
            <person name="Wu Q."/>
            <person name="Li C."/>
            <person name="Ren X."/>
            <person name="Wang J."/>
            <person name="Wang X."/>
            <person name="Li D."/>
            <person name="Liu D."/>
            <person name="Zhang X."/>
            <person name="Ji Z."/>
            <person name="Zhao W."/>
            <person name="Sun Y."/>
            <person name="Zhang Z."/>
            <person name="Bao J."/>
            <person name="Han Y."/>
            <person name="Dong L."/>
            <person name="Ji J."/>
            <person name="Chen P."/>
            <person name="Wu S."/>
            <person name="Liu J."/>
            <person name="Xiao Y."/>
            <person name="Bu D."/>
            <person name="Tan J."/>
            <person name="Yang L."/>
            <person name="Ye C."/>
            <person name="Zhang J."/>
            <person name="Xu J."/>
            <person name="Zhou Y."/>
            <person name="Yu Y."/>
            <person name="Zhang B."/>
            <person name="Zhuang S."/>
            <person name="Wei H."/>
            <person name="Liu B."/>
            <person name="Lei M."/>
            <person name="Yu H."/>
            <person name="Li Y."/>
            <person name="Xu H."/>
            <person name="Wei S."/>
            <person name="He X."/>
            <person name="Fang L."/>
            <person name="Zhang Z."/>
            <person name="Zhang Y."/>
            <person name="Huang X."/>
            <person name="Su Z."/>
            <person name="Tong W."/>
            <person name="Li J."/>
            <person name="Tong Z."/>
            <person name="Li S."/>
            <person name="Ye J."/>
            <person name="Wang L."/>
            <person name="Fang L."/>
            <person name="Lei T."/>
            <person name="Chen C.-S."/>
            <person name="Chen H.-C."/>
            <person name="Xu Z."/>
            <person name="Li H."/>
            <person name="Huang H."/>
            <person name="Zhang F."/>
            <person name="Xu H."/>
            <person name="Li N."/>
            <person name="Zhao C."/>
            <person name="Li S."/>
            <person name="Dong L."/>
            <person name="Huang Y."/>
            <person name="Li L."/>
            <person name="Xi Y."/>
            <person name="Qi Q."/>
            <person name="Li W."/>
            <person name="Zhang B."/>
            <person name="Hu W."/>
            <person name="Zhang Y."/>
            <person name="Tian X."/>
            <person name="Jiao Y."/>
            <person name="Liang X."/>
            <person name="Jin J."/>
            <person name="Gao L."/>
            <person name="Zheng W."/>
            <person name="Hao B."/>
            <person name="Liu S.-M."/>
            <person name="Wang W."/>
            <person name="Yuan L."/>
            <person name="Cao M."/>
            <person name="McDermott J."/>
            <person name="Samudrala R."/>
            <person name="Wang J."/>
            <person name="Wong G.K.-S."/>
            <person name="Yang H."/>
        </authorList>
    </citation>
    <scope>NUCLEOTIDE SEQUENCE [LARGE SCALE GENOMIC DNA]</scope>
    <source>
        <strain>cv. Nipponbare</strain>
    </source>
</reference>
<reference key="7">
    <citation type="journal article" date="2003" name="Science">
        <title>Collection, mapping, and annotation of over 28,000 cDNA clones from japonica rice.</title>
        <authorList>
            <consortium name="The rice full-length cDNA consortium"/>
        </authorList>
    </citation>
    <scope>NUCLEOTIDE SEQUENCE [LARGE SCALE MRNA]</scope>
    <source>
        <strain>cv. Nipponbare</strain>
    </source>
</reference>
<feature type="chain" id="PRO_0000116373" description="Small ribosomal subunit protein eS10y">
    <location>
        <begin position="1"/>
        <end position="183"/>
    </location>
</feature>
<feature type="region of interest" description="Disordered" evidence="2">
    <location>
        <begin position="91"/>
        <end position="183"/>
    </location>
</feature>
<feature type="compositionally biased region" description="Basic and acidic residues" evidence="2">
    <location>
        <begin position="109"/>
        <end position="130"/>
    </location>
</feature>
<feature type="compositionally biased region" description="Gly residues" evidence="2">
    <location>
        <begin position="131"/>
        <end position="146"/>
    </location>
</feature>
<feature type="compositionally biased region" description="Gly residues" evidence="2">
    <location>
        <begin position="161"/>
        <end position="175"/>
    </location>
</feature>
<feature type="sequence conflict" description="In Ref. 1; BAB21002." evidence="3" ref="1">
    <original>L</original>
    <variation>F</variation>
    <location>
        <position position="45"/>
    </location>
</feature>
<feature type="sequence conflict" description="In Ref. 1; BAB21002." evidence="3" ref="1">
    <original>R</original>
    <variation>L</variation>
    <location>
        <position position="77"/>
    </location>
</feature>
<feature type="sequence conflict" description="In Ref. 7; AK102190." evidence="3" ref="7">
    <original>K</original>
    <variation>E</variation>
    <location>
        <position position="92"/>
    </location>
</feature>
<organism>
    <name type="scientific">Oryza sativa subsp. japonica</name>
    <name type="common">Rice</name>
    <dbReference type="NCBI Taxonomy" id="39947"/>
    <lineage>
        <taxon>Eukaryota</taxon>
        <taxon>Viridiplantae</taxon>
        <taxon>Streptophyta</taxon>
        <taxon>Embryophyta</taxon>
        <taxon>Tracheophyta</taxon>
        <taxon>Spermatophyta</taxon>
        <taxon>Magnoliopsida</taxon>
        <taxon>Liliopsida</taxon>
        <taxon>Poales</taxon>
        <taxon>Poaceae</taxon>
        <taxon>BOP clade</taxon>
        <taxon>Oryzoideae</taxon>
        <taxon>Oryzeae</taxon>
        <taxon>Oryzinae</taxon>
        <taxon>Oryza</taxon>
        <taxon>Oryza sativa</taxon>
    </lineage>
</organism>
<gene>
    <name evidence="3" type="primary">RPS10-2</name>
    <name evidence="4" type="ordered locus">Os04g0430100</name>
    <name evidence="3" type="ordered locus">LOC_Os04g35090</name>
    <name evidence="6" type="ORF">OsJ_14842</name>
    <name evidence="5" type="ORF">OSJNBa0042L16.19</name>
</gene>